<organism>
    <name type="scientific">Mycobacterium tuberculosis (strain ATCC 25618 / H37Rv)</name>
    <dbReference type="NCBI Taxonomy" id="83332"/>
    <lineage>
        <taxon>Bacteria</taxon>
        <taxon>Bacillati</taxon>
        <taxon>Actinomycetota</taxon>
        <taxon>Actinomycetes</taxon>
        <taxon>Mycobacteriales</taxon>
        <taxon>Mycobacteriaceae</taxon>
        <taxon>Mycobacterium</taxon>
        <taxon>Mycobacterium tuberculosis complex</taxon>
    </lineage>
</organism>
<sequence length="276" mass="29217">MSSFEGKVAVITGAGSGIGRALALNLSEKRAKLALSDVDTDGLAKTVRLAQALGAQVKSDRLDVAEREAVLAHADAVVAHFGTVHQVYNNAGIAYNGNVDKSEFKDIERIIDVDFWGVVNGTKAFLPHVIASGDGHIVNISSLFGLIAVPGQSAYNAAKFAVRGFTEALRQEMLVARHPVKVTCVHPGGIKTAVARNATVADGEDQQTFAEFFDRRLALHSPEMAAKTIVNGVAKGQARVVVGLEAKAVDVLARIMGSSYQRLVAAGVAKFFPWAK</sequence>
<gene>
    <name type="primary">sadH</name>
    <name type="ordered locus">Rv3085</name>
</gene>
<protein>
    <recommendedName>
        <fullName>Putative oxidoreductase SadH</fullName>
        <ecNumber>1.-.-.-</ecNumber>
    </recommendedName>
</protein>
<name>SADH_MYCTU</name>
<feature type="chain" id="PRO_0000420878" description="Putative oxidoreductase SadH">
    <location>
        <begin position="1"/>
        <end position="276"/>
    </location>
</feature>
<feature type="active site" description="Proton acceptor" evidence="2">
    <location>
        <position position="155"/>
    </location>
</feature>
<feature type="binding site" evidence="1">
    <location>
        <position position="142"/>
    </location>
    <ligand>
        <name>substrate</name>
    </ligand>
</feature>
<evidence type="ECO:0000250" key="1"/>
<evidence type="ECO:0000255" key="2">
    <source>
        <dbReference type="PROSITE-ProRule" id="PRU10001"/>
    </source>
</evidence>
<evidence type="ECO:0000269" key="3">
    <source>
    </source>
</evidence>
<evidence type="ECO:0000269" key="4">
    <source>
    </source>
</evidence>
<evidence type="ECO:0000269" key="5">
    <source>
    </source>
</evidence>
<evidence type="ECO:0000305" key="6"/>
<proteinExistence type="evidence at transcript level"/>
<reference key="1">
    <citation type="journal article" date="1998" name="Nature">
        <title>Deciphering the biology of Mycobacterium tuberculosis from the complete genome sequence.</title>
        <authorList>
            <person name="Cole S.T."/>
            <person name="Brosch R."/>
            <person name="Parkhill J."/>
            <person name="Garnier T."/>
            <person name="Churcher C.M."/>
            <person name="Harris D.E."/>
            <person name="Gordon S.V."/>
            <person name="Eiglmeier K."/>
            <person name="Gas S."/>
            <person name="Barry C.E. III"/>
            <person name="Tekaia F."/>
            <person name="Badcock K."/>
            <person name="Basham D."/>
            <person name="Brown D."/>
            <person name="Chillingworth T."/>
            <person name="Connor R."/>
            <person name="Davies R.M."/>
            <person name="Devlin K."/>
            <person name="Feltwell T."/>
            <person name="Gentles S."/>
            <person name="Hamlin N."/>
            <person name="Holroyd S."/>
            <person name="Hornsby T."/>
            <person name="Jagels K."/>
            <person name="Krogh A."/>
            <person name="McLean J."/>
            <person name="Moule S."/>
            <person name="Murphy L.D."/>
            <person name="Oliver S."/>
            <person name="Osborne J."/>
            <person name="Quail M.A."/>
            <person name="Rajandream M.A."/>
            <person name="Rogers J."/>
            <person name="Rutter S."/>
            <person name="Seeger K."/>
            <person name="Skelton S."/>
            <person name="Squares S."/>
            <person name="Squares R."/>
            <person name="Sulston J.E."/>
            <person name="Taylor K."/>
            <person name="Whitehead S."/>
            <person name="Barrell B.G."/>
        </authorList>
    </citation>
    <scope>NUCLEOTIDE SEQUENCE [LARGE SCALE GENOMIC DNA]</scope>
    <source>
        <strain>ATCC 25618 / H37Rv</strain>
    </source>
</reference>
<reference key="2">
    <citation type="journal article" date="2003" name="FEMS Microbiol. Lett.">
        <title>mymA operon of Mycobacterium tuberculosis: its regulation and importance in the cell envelope.</title>
        <authorList>
            <person name="Singh A."/>
            <person name="Jain S."/>
            <person name="Gupta S."/>
            <person name="Das T."/>
            <person name="Tyagi A.K."/>
        </authorList>
    </citation>
    <scope>INDUCTION</scope>
    <scope>GENE NAME</scope>
</reference>
<reference key="3">
    <citation type="journal article" date="2005" name="J. Bacteriol.">
        <title>Requirement of the mymA operon for appropriate cell wall ultrastructure and persistence of Mycobacterium tuberculosis in the spleens of guinea pigs.</title>
        <authorList>
            <person name="Singh A."/>
            <person name="Gupta R."/>
            <person name="Vishwakarma R.A."/>
            <person name="Narayanan P.R."/>
            <person name="Paramasivan C.N."/>
            <person name="Ramanathan V.D."/>
            <person name="Tyagi A.K."/>
        </authorList>
    </citation>
    <scope>FUNCTION</scope>
    <scope>DISRUPTION PHENOTYPE</scope>
    <source>
        <strain>Erdman</strain>
    </source>
</reference>
<reference key="4">
    <citation type="journal article" date="2007" name="Tuberculosis">
        <title>The acid-induced operon Rv3083-Rv3089 is required for growth of Mycobacterium tuberculosis in macrophages.</title>
        <authorList>
            <person name="Cheruvu M."/>
            <person name="Plikaytis B.B."/>
            <person name="Shinnick T.M."/>
        </authorList>
    </citation>
    <scope>DISRUPTION PHENOTYPE</scope>
    <source>
        <strain>ATCC 25618 / H37Rv</strain>
    </source>
</reference>
<accession>P9WGP9</accession>
<accession>F2GNY3</accession>
<accession>L0TEA6</accession>
<accession>O53302</accession>
<accession>Q7D656</accession>
<dbReference type="EC" id="1.-.-.-"/>
<dbReference type="EMBL" id="AL123456">
    <property type="protein sequence ID" value="CCP45894.1"/>
    <property type="molecule type" value="Genomic_DNA"/>
</dbReference>
<dbReference type="PIR" id="A70853">
    <property type="entry name" value="A70853"/>
</dbReference>
<dbReference type="RefSeq" id="NP_217601.1">
    <property type="nucleotide sequence ID" value="NC_000962.3"/>
</dbReference>
<dbReference type="RefSeq" id="WP_003416074.1">
    <property type="nucleotide sequence ID" value="NZ_NVQJ01000011.1"/>
</dbReference>
<dbReference type="SMR" id="P9WGP9"/>
<dbReference type="FunCoup" id="P9WGP9">
    <property type="interactions" value="41"/>
</dbReference>
<dbReference type="STRING" id="83332.Rv3085"/>
<dbReference type="PaxDb" id="83332-Rv3085"/>
<dbReference type="DNASU" id="888656"/>
<dbReference type="GeneID" id="888656"/>
<dbReference type="KEGG" id="mtu:Rv3085"/>
<dbReference type="KEGG" id="mtv:RVBD_3085"/>
<dbReference type="TubercuList" id="Rv3085"/>
<dbReference type="eggNOG" id="COG4221">
    <property type="taxonomic scope" value="Bacteria"/>
</dbReference>
<dbReference type="InParanoid" id="P9WGP9"/>
<dbReference type="OrthoDB" id="4690547at2"/>
<dbReference type="PhylomeDB" id="P9WGP9"/>
<dbReference type="Proteomes" id="UP000001584">
    <property type="component" value="Chromosome"/>
</dbReference>
<dbReference type="GO" id="GO:0016491">
    <property type="term" value="F:oxidoreductase activity"/>
    <property type="evidence" value="ECO:0007669"/>
    <property type="project" value="UniProtKB-KW"/>
</dbReference>
<dbReference type="GO" id="GO:0051701">
    <property type="term" value="P:biological process involved in interaction with host"/>
    <property type="evidence" value="ECO:0000315"/>
    <property type="project" value="MTBBASE"/>
</dbReference>
<dbReference type="GO" id="GO:0010447">
    <property type="term" value="P:response to acidic pH"/>
    <property type="evidence" value="ECO:0000270"/>
    <property type="project" value="MTBBASE"/>
</dbReference>
<dbReference type="FunFam" id="3.40.50.720:FF:000466">
    <property type="entry name" value="Probable short-chain type dehydrogenase/reductase"/>
    <property type="match status" value="1"/>
</dbReference>
<dbReference type="Gene3D" id="3.40.50.720">
    <property type="entry name" value="NAD(P)-binding Rossmann-like Domain"/>
    <property type="match status" value="1"/>
</dbReference>
<dbReference type="InterPro" id="IPR036291">
    <property type="entry name" value="NAD(P)-bd_dom_sf"/>
</dbReference>
<dbReference type="InterPro" id="IPR020904">
    <property type="entry name" value="Sc_DH/Rdtase_CS"/>
</dbReference>
<dbReference type="InterPro" id="IPR002347">
    <property type="entry name" value="SDR_fam"/>
</dbReference>
<dbReference type="PANTHER" id="PTHR43391:SF82">
    <property type="entry name" value="OXIDOREDUCTASE SADH-RELATED"/>
    <property type="match status" value="1"/>
</dbReference>
<dbReference type="PANTHER" id="PTHR43391">
    <property type="entry name" value="RETINOL DEHYDROGENASE-RELATED"/>
    <property type="match status" value="1"/>
</dbReference>
<dbReference type="Pfam" id="PF00106">
    <property type="entry name" value="adh_short"/>
    <property type="match status" value="1"/>
</dbReference>
<dbReference type="PRINTS" id="PR00081">
    <property type="entry name" value="GDHRDH"/>
</dbReference>
<dbReference type="PRINTS" id="PR00080">
    <property type="entry name" value="SDRFAMILY"/>
</dbReference>
<dbReference type="SMART" id="SM00822">
    <property type="entry name" value="PKS_KR"/>
    <property type="match status" value="1"/>
</dbReference>
<dbReference type="SUPFAM" id="SSF51735">
    <property type="entry name" value="NAD(P)-binding Rossmann-fold domains"/>
    <property type="match status" value="1"/>
</dbReference>
<dbReference type="PROSITE" id="PS00061">
    <property type="entry name" value="ADH_SHORT"/>
    <property type="match status" value="1"/>
</dbReference>
<comment type="function">
    <text evidence="4">Required for maintaining the appropriate mycolic acid composition and permeability of the envelope on its exposure to acidic pH.</text>
</comment>
<comment type="induction">
    <text evidence="3">Expression is controlled by VirS. Induced at acidic pH and in macrophages.</text>
</comment>
<comment type="disruption phenotype">
    <text evidence="4 5">Inactivation of the mymA operon causes altered cell wall structure, reduced contents and altered composition of mycolic acids along with the accumulation of saturated C24 and C26 fatty acids, and enhanced susceptibility to antibiotics, detergents and acidic pH. Also impairs ability to survive in macrophages.</text>
</comment>
<comment type="similarity">
    <text evidence="6">Belongs to the short-chain dehydrogenases/reductases (SDR) family.</text>
</comment>
<keyword id="KW-0560">Oxidoreductase</keyword>
<keyword id="KW-1185">Reference proteome</keyword>